<accession>P35065</accession>
<dbReference type="EMBL" id="L18893">
    <property type="protein sequence ID" value="AAC37292.1"/>
    <property type="molecule type" value="Unassigned_DNA"/>
</dbReference>
<dbReference type="EMBL" id="GG662605">
    <property type="protein sequence ID" value="EAS01097.1"/>
    <property type="molecule type" value="Genomic_DNA"/>
</dbReference>
<dbReference type="PIR" id="S41472">
    <property type="entry name" value="S41472"/>
</dbReference>
<dbReference type="RefSeq" id="XP_001021342.1">
    <property type="nucleotide sequence ID" value="XM_001021342.3"/>
</dbReference>
<dbReference type="SMR" id="P35065"/>
<dbReference type="FunCoup" id="P35065">
    <property type="interactions" value="207"/>
</dbReference>
<dbReference type="STRING" id="312017.P35065"/>
<dbReference type="iPTMnet" id="P35065"/>
<dbReference type="EnsemblProtists" id="EAS01097">
    <property type="protein sequence ID" value="EAS01097"/>
    <property type="gene ID" value="TTHERM_00316500"/>
</dbReference>
<dbReference type="GeneID" id="7829734"/>
<dbReference type="KEGG" id="tet:TTHERM_00316500"/>
<dbReference type="eggNOG" id="KOG1756">
    <property type="taxonomic scope" value="Eukaryota"/>
</dbReference>
<dbReference type="HOGENOM" id="CLU_062828_3_1_1"/>
<dbReference type="InParanoid" id="P35065"/>
<dbReference type="OMA" id="CALESQH"/>
<dbReference type="OrthoDB" id="308519at2759"/>
<dbReference type="Proteomes" id="UP000009168">
    <property type="component" value="Unassembled WGS sequence"/>
</dbReference>
<dbReference type="GO" id="GO:0000786">
    <property type="term" value="C:nucleosome"/>
    <property type="evidence" value="ECO:0007669"/>
    <property type="project" value="UniProtKB-KW"/>
</dbReference>
<dbReference type="GO" id="GO:0005634">
    <property type="term" value="C:nucleus"/>
    <property type="evidence" value="ECO:0007669"/>
    <property type="project" value="UniProtKB-SubCell"/>
</dbReference>
<dbReference type="GO" id="GO:0003677">
    <property type="term" value="F:DNA binding"/>
    <property type="evidence" value="ECO:0007669"/>
    <property type="project" value="UniProtKB-KW"/>
</dbReference>
<dbReference type="GO" id="GO:0046982">
    <property type="term" value="F:protein heterodimerization activity"/>
    <property type="evidence" value="ECO:0007669"/>
    <property type="project" value="InterPro"/>
</dbReference>
<dbReference type="GO" id="GO:0030527">
    <property type="term" value="F:structural constituent of chromatin"/>
    <property type="evidence" value="ECO:0007669"/>
    <property type="project" value="InterPro"/>
</dbReference>
<dbReference type="CDD" id="cd00074">
    <property type="entry name" value="HFD_H2A"/>
    <property type="match status" value="1"/>
</dbReference>
<dbReference type="FunFam" id="1.10.20.10:FF:000026">
    <property type="entry name" value="Histone H2A"/>
    <property type="match status" value="1"/>
</dbReference>
<dbReference type="Gene3D" id="1.10.20.10">
    <property type="entry name" value="Histone, subunit A"/>
    <property type="match status" value="1"/>
</dbReference>
<dbReference type="InterPro" id="IPR009072">
    <property type="entry name" value="Histone-fold"/>
</dbReference>
<dbReference type="InterPro" id="IPR002119">
    <property type="entry name" value="Histone_H2A"/>
</dbReference>
<dbReference type="InterPro" id="IPR007125">
    <property type="entry name" value="Histone_H2A/H2B/H3"/>
</dbReference>
<dbReference type="InterPro" id="IPR032454">
    <property type="entry name" value="Histone_H2A_C"/>
</dbReference>
<dbReference type="InterPro" id="IPR032458">
    <property type="entry name" value="Histone_H2A_CS"/>
</dbReference>
<dbReference type="PANTHER" id="PTHR23430">
    <property type="entry name" value="HISTONE H2A"/>
    <property type="match status" value="1"/>
</dbReference>
<dbReference type="Pfam" id="PF00125">
    <property type="entry name" value="Histone"/>
    <property type="match status" value="1"/>
</dbReference>
<dbReference type="Pfam" id="PF16211">
    <property type="entry name" value="Histone_H2A_C"/>
    <property type="match status" value="1"/>
</dbReference>
<dbReference type="PRINTS" id="PR00620">
    <property type="entry name" value="HISTONEH2A"/>
</dbReference>
<dbReference type="SMART" id="SM00414">
    <property type="entry name" value="H2A"/>
    <property type="match status" value="1"/>
</dbReference>
<dbReference type="SUPFAM" id="SSF47113">
    <property type="entry name" value="Histone-fold"/>
    <property type="match status" value="1"/>
</dbReference>
<dbReference type="PROSITE" id="PS00046">
    <property type="entry name" value="HISTONE_H2A"/>
    <property type="match status" value="1"/>
</dbReference>
<gene>
    <name type="primary">HTA2</name>
    <name type="ORF">TTHERM_00316500</name>
</gene>
<sequence length="133" mass="14284">MSTTGKGGKAKGKTASSKQVSRSARAGLQFPVGRISRFLKNGRYSERIGTGAPVYLAAVLEYLAAEVLELAGNAAKDNKKTRIVPRHILLAIRNDEELNKLMANTTIADGGVLPNINPMLLPSKTKKSTEPEH</sequence>
<name>H2A1_TETTS</name>
<proteinExistence type="evidence at protein level"/>
<organism>
    <name type="scientific">Tetrahymena thermophila (strain SB210)</name>
    <dbReference type="NCBI Taxonomy" id="312017"/>
    <lineage>
        <taxon>Eukaryota</taxon>
        <taxon>Sar</taxon>
        <taxon>Alveolata</taxon>
        <taxon>Ciliophora</taxon>
        <taxon>Intramacronucleata</taxon>
        <taxon>Oligohymenophorea</taxon>
        <taxon>Hymenostomatida</taxon>
        <taxon>Tetrahymenina</taxon>
        <taxon>Tetrahymenidae</taxon>
        <taxon>Tetrahymena</taxon>
    </lineage>
</organism>
<reference key="1">
    <citation type="journal article" date="1993" name="Nucleic Acids Res.">
        <title>Mapping the 5' and 3' ends of Tetrahymena thermophila mRNAs using RNA ligase mediated amplification of cDNA ends (RLM-RACE).</title>
        <authorList>
            <person name="Liu X."/>
            <person name="Gorovsky M.A."/>
        </authorList>
    </citation>
    <scope>NUCLEOTIDE SEQUENCE [MRNA]</scope>
    <source>
        <strain>CU428</strain>
    </source>
</reference>
<reference key="2">
    <citation type="journal article" date="1996" name="Nucleic Acids Res.">
        <title>Cloning and characterization of the major histone H2A genes completes the cloning and sequencing of known histone genes of Tetrahymena thermophila.</title>
        <authorList>
            <person name="Liu X."/>
            <person name="Gorovsky M.A."/>
        </authorList>
    </citation>
    <scope>NUCLEOTIDE SEQUENCE [GENOMIC DNA]</scope>
    <source>
        <strain>CU428</strain>
    </source>
</reference>
<reference key="3">
    <citation type="journal article" date="2006" name="PLoS Biol.">
        <title>Macronuclear genome sequence of the ciliate Tetrahymena thermophila, a model eukaryote.</title>
        <authorList>
            <person name="Eisen J.A."/>
            <person name="Coyne R.S."/>
            <person name="Wu M."/>
            <person name="Wu D."/>
            <person name="Thiagarajan M."/>
            <person name="Wortman J.R."/>
            <person name="Badger J.H."/>
            <person name="Ren Q."/>
            <person name="Amedeo P."/>
            <person name="Jones K.M."/>
            <person name="Tallon L.J."/>
            <person name="Delcher A.L."/>
            <person name="Salzberg S.L."/>
            <person name="Silva J.C."/>
            <person name="Haas B.J."/>
            <person name="Majoros W.H."/>
            <person name="Farzad M."/>
            <person name="Carlton J.M."/>
            <person name="Smith R.K. Jr."/>
            <person name="Garg J."/>
            <person name="Pearlman R.E."/>
            <person name="Karrer K.M."/>
            <person name="Sun L."/>
            <person name="Manning G."/>
            <person name="Elde N.C."/>
            <person name="Turkewitz A.P."/>
            <person name="Asai D.J."/>
            <person name="Wilkes D.E."/>
            <person name="Wang Y."/>
            <person name="Cai H."/>
            <person name="Collins K."/>
            <person name="Stewart B.A."/>
            <person name="Lee S.R."/>
            <person name="Wilamowska K."/>
            <person name="Weinberg Z."/>
            <person name="Ruzzo W.L."/>
            <person name="Wloga D."/>
            <person name="Gaertig J."/>
            <person name="Frankel J."/>
            <person name="Tsao C.-C."/>
            <person name="Gorovsky M.A."/>
            <person name="Keeling P.J."/>
            <person name="Waller R.F."/>
            <person name="Patron N.J."/>
            <person name="Cherry J.M."/>
            <person name="Stover N.A."/>
            <person name="Krieger C.J."/>
            <person name="del Toro C."/>
            <person name="Ryder H.F."/>
            <person name="Williamson S.C."/>
            <person name="Barbeau R.A."/>
            <person name="Hamilton E.P."/>
            <person name="Orias E."/>
        </authorList>
    </citation>
    <scope>NUCLEOTIDE SEQUENCE [LARGE SCALE GENOMIC DNA]</scope>
    <source>
        <strain>SB210</strain>
    </source>
</reference>
<reference key="4">
    <citation type="journal article" date="1982" name="J. Biol. Chem.">
        <title>Regulation of histone acetylation in Tetrahymena macro- and micronuclei.</title>
        <authorList>
            <person name="Vavra K.J."/>
            <person name="Allis C.D."/>
            <person name="Gorovsky M.A."/>
        </authorList>
    </citation>
    <scope>ACETYLATION</scope>
    <source>
        <strain>B</strain>
    </source>
</reference>
<reference key="5">
    <citation type="journal article" date="1989" name="Biochemistry">
        <title>Ubiquitinated histone H2B is preferentially located in transcriptionally active chromatin.</title>
        <authorList>
            <person name="Nickel B.E."/>
            <person name="Allis C.D."/>
            <person name="Davie J.R."/>
        </authorList>
    </citation>
    <scope>UBIQUITINATION</scope>
</reference>
<keyword id="KW-0007">Acetylation</keyword>
<keyword id="KW-0158">Chromosome</keyword>
<keyword id="KW-0238">DNA-binding</keyword>
<keyword id="KW-1017">Isopeptide bond</keyword>
<keyword id="KW-0544">Nucleosome core</keyword>
<keyword id="KW-0539">Nucleus</keyword>
<keyword id="KW-0597">Phosphoprotein</keyword>
<keyword id="KW-1185">Reference proteome</keyword>
<keyword id="KW-0832">Ubl conjugation</keyword>
<evidence type="ECO:0000250" key="1"/>
<evidence type="ECO:0000256" key="2">
    <source>
        <dbReference type="SAM" id="MobiDB-lite"/>
    </source>
</evidence>
<evidence type="ECO:0000269" key="3">
    <source>
    </source>
</evidence>
<evidence type="ECO:0000305" key="4"/>
<evidence type="ECO:0000305" key="5">
    <source>
    </source>
</evidence>
<feature type="initiator methionine" description="Removed" evidence="1">
    <location>
        <position position="1"/>
    </location>
</feature>
<feature type="chain" id="PRO_0000055286" description="Histone H2A.1">
    <location>
        <begin position="2"/>
        <end position="133"/>
    </location>
</feature>
<feature type="region of interest" description="Disordered" evidence="2">
    <location>
        <begin position="1"/>
        <end position="23"/>
    </location>
</feature>
<feature type="modified residue" description="N-acetylserine" evidence="1">
    <location>
        <position position="2"/>
    </location>
</feature>
<feature type="modified residue" description="N6-acetyllysine" evidence="1">
    <location>
        <position position="6"/>
    </location>
</feature>
<feature type="modified residue" description="N6-acetyllysine" evidence="1">
    <location>
        <position position="9"/>
    </location>
</feature>
<feature type="modified residue" description="N6-acetyllysine" evidence="1">
    <location>
        <position position="11"/>
    </location>
</feature>
<feature type="modified residue" description="N6-acetyllysine" evidence="1">
    <location>
        <position position="13"/>
    </location>
</feature>
<feature type="modified residue" description="N6-acetyllysine" evidence="1">
    <location>
        <position position="18"/>
    </location>
</feature>
<feature type="modified residue" description="Phosphoserine" evidence="1">
    <location>
        <position position="123"/>
    </location>
</feature>
<feature type="cross-link" description="Glycyl lysine isopeptide (Lys-Gly) (interchain with G-Cter in ubiquitin)" evidence="5">
    <location>
        <position position="124"/>
    </location>
</feature>
<comment type="function">
    <text>Core component of nucleosome. Nucleosomes wrap and compact DNA into chromatin, limiting DNA accessibility to the cellular machineries which require DNA as a template. Histones thereby play a central role in transcription regulation, DNA repair, DNA replication and chromosomal stability. DNA accessibility is regulated via a complex set of post-translational modifications of histones, also called histone code, and nucleosome remodeling.</text>
</comment>
<comment type="subunit">
    <text>The nucleosome is a histone octamer containing two molecules each of H2A, H2B, H3 and H4 assembled in one H3-H4 heterotetramer and two H2A-H2B heterodimers. The octamer wraps approximately 147 bp of DNA.</text>
</comment>
<comment type="subcellular location">
    <subcellularLocation>
        <location>Nucleus</location>
    </subcellularLocation>
    <subcellularLocation>
        <location>Chromosome</location>
    </subcellularLocation>
    <text>Localizes to both the large, transcriptionally active, somatic macronucleus (MAC) and the small, transcriptionally inert, germ line micronucleus (MIC).</text>
</comment>
<comment type="PTM">
    <text evidence="1">Monoubiquitination of Lys-124 gives a specific tag for epigenetic transcriptional repression.</text>
</comment>
<comment type="PTM">
    <text evidence="3">Acetylation occurs almost exclusively in the MAC.</text>
</comment>
<comment type="similarity">
    <text evidence="4">Belongs to the histone H2A family.</text>
</comment>
<comment type="caution">
    <text evidence="4">To ensure consistency between histone entries, we follow the 'Brno' nomenclature for histone modifications, with positions referring to those used in the literature for the 'closest' model organism. Due to slight variations in histone sequences between organisms and to the presence of initiator methionine in UniProtKB/Swiss-Prot sequences, the actual positions of modified amino acids in the sequence generally differ. In this entry the following conventions are used: H2AK5ac = acetylated Lys-6; H2AK8ac = acetylated Lys-9; H2AK10ac = acetylated Lys-11; H2AK12ac = acetylated Lys-13; H2AK17ac = acetylated Lys-18; H2AS122ph = phosphorylated Ser-123; H2AK123ub1 = monoubiquitinated Lys-124; H2AS127ph = phosphorylated Ser-128.</text>
</comment>
<protein>
    <recommendedName>
        <fullName>Histone H2A.1</fullName>
    </recommendedName>
    <alternativeName>
        <fullName>Histone H2A.2</fullName>
        <shortName>H2A2</shortName>
    </alternativeName>
</protein>